<protein>
    <recommendedName>
        <fullName evidence="11">Probable non-functional T cell receptor beta variable 23-1</fullName>
    </recommendedName>
</protein>
<comment type="function">
    <text evidence="3 4 6 7 8">Probable non-functional open reading frame (ORF) of V region of the variable domain of T cell receptor (TR) beta chain (PubMed:24600447). Non-functional ORF generally cannot participate in the synthesis of a productive T cell receptor (TR) chain due to altered V-(D)-J or switch recombination and/or splicing site (at mRNA level) and/or conserved amino acid change (protein level) (PubMed:9619395). Alpha-beta T cell receptors are antigen specific receptors which are essential to the immune response and are present on the cell surface of T lymphocytes. Recognize peptide-major histocompatibility (MH) (pMH) complexes that are displayed by antigen presenting cells (APC), a prerequisite for efficient T cell adaptive immunity against pathogens (PubMed:25493333). Binding of alpha-beta TR to pMH complex initiates TR-CD3 clustering on the cell surface and intracellular activation of LCK that phosphorylates the ITAM motifs of CD3G, CD3D, CD3E and CD247 enabling the recruitment of ZAP70. In turn ZAP70 phosphorylates LAT, which recruits numerous signaling molecules to form the LAT signalosome. The LAT signalosome propagates signal branching to three major signaling pathways, the calcium, the mitogen-activated protein kinase (MAPK) kinase and the nuclear factor NF-kappa-B (NF-kB) pathways, leading to the mobilization of transcription factors that are critical for gene expression and essential for T cell growth and differentiation (PubMed:23524462). The T cell repertoire is generated in the thymus, by V-(D)-J rearrangement. This repertoire is then shaped by intrathymic selection events to generate a peripheral T cell pool of self-MH restricted, non-autoaggressive T cells. Post-thymic interaction of alpha-beta TR with the pMH complexes shapes TR structural and functional avidity (PubMed:15040585).</text>
</comment>
<comment type="subunit">
    <text evidence="5">Alpha-beta TR is a heterodimer composed of an alpha and beta chain; disulfide-linked. The alpha-beta TR is associated with the transmembrane signaling CD3 coreceptor proteins to form the TR-CD3 (TcR or TCR). The assembly of alpha-beta TR heterodimers with CD3 occurs in the endoplasmic reticulum where a single alpha-beta TR heterodimer associates with one CD3D-CD3E heterodimer, one CD3G-CD3E heterodimer and one CD247 homodimer forming a stable octameric structure. CD3D-CD3E and CD3G-CD3E heterodimers preferentially associate with TR alpha and TR beta chains, respectively. The association of the CD247 homodimer is the last step of TcR assembly in the endoplasmic reticulum and is required for transport to the cell surface.</text>
</comment>
<comment type="subcellular location">
    <subcellularLocation>
        <location evidence="5">Cell membrane</location>
    </subcellularLocation>
</comment>
<comment type="polymorphism">
    <text evidence="11">There are several alleles. The sequence shown is that of IMGT allele TRBV23-1*01.</text>
</comment>
<comment type="caution">
    <text evidence="9 11">Most probably a non-functional protein that cannot participate to the synthesis of a productive T cell receptor (TR) chain due to an altered splicing site (PubMed:9619395).</text>
</comment>
<organism>
    <name type="scientific">Homo sapiens</name>
    <name type="common">Human</name>
    <dbReference type="NCBI Taxonomy" id="9606"/>
    <lineage>
        <taxon>Eukaryota</taxon>
        <taxon>Metazoa</taxon>
        <taxon>Chordata</taxon>
        <taxon>Craniata</taxon>
        <taxon>Vertebrata</taxon>
        <taxon>Euteleostomi</taxon>
        <taxon>Mammalia</taxon>
        <taxon>Eutheria</taxon>
        <taxon>Euarchontoglires</taxon>
        <taxon>Primates</taxon>
        <taxon>Haplorrhini</taxon>
        <taxon>Catarrhini</taxon>
        <taxon>Hominidae</taxon>
        <taxon>Homo</taxon>
    </lineage>
</organism>
<name>TVB23_HUMAN</name>
<sequence>MGTRLLGCAALCLLAADSFHAKVTQTPGHLVKGKGQKTKMDCTPEKGHTFVYWYQQNQNKEFMLLISFQNEQVLQETEMHKKRFSSQCPKNAPCSLAILSSEPGDTALYLCASSQ</sequence>
<accession>A0A0A0MS06</accession>
<proteinExistence type="evidence at protein level"/>
<dbReference type="EMBL" id="AC239612">
    <property type="status" value="NOT_ANNOTATED_CDS"/>
    <property type="molecule type" value="Genomic_DNA"/>
</dbReference>
<dbReference type="EMBL" id="AC244472">
    <property type="status" value="NOT_ANNOTATED_CDS"/>
    <property type="molecule type" value="Genomic_DNA"/>
</dbReference>
<dbReference type="SMR" id="A0A0A0MS06"/>
<dbReference type="FunCoup" id="A0A0A0MS06">
    <property type="interactions" value="347"/>
</dbReference>
<dbReference type="BioMuta" id="TRBV23-1"/>
<dbReference type="Ensembl" id="ENST00000390396.1">
    <property type="protein sequence ID" value="ENSP00000374919.1"/>
    <property type="gene ID" value="ENSG00000211749.1"/>
</dbReference>
<dbReference type="Ensembl" id="ENST00000633842.1">
    <property type="protein sequence ID" value="ENSP00000487718.1"/>
    <property type="gene ID" value="ENSG00000282449.1"/>
</dbReference>
<dbReference type="UCSC" id="uc064isu.1">
    <property type="organism name" value="human"/>
</dbReference>
<dbReference type="AGR" id="HGNC:12201"/>
<dbReference type="GeneCards" id="TRBV23-1"/>
<dbReference type="HGNC" id="HGNC:12201">
    <property type="gene designation" value="TRBV23-1"/>
</dbReference>
<dbReference type="HPA" id="ENSG00000211749">
    <property type="expression patterns" value="Tissue enriched (lymphoid)"/>
</dbReference>
<dbReference type="neXtProt" id="NX_A0A0A0MS06"/>
<dbReference type="OpenTargets" id="ENSG00000211749"/>
<dbReference type="VEuPathDB" id="HostDB:ENSG00000211749"/>
<dbReference type="GeneTree" id="ENSGT00940000155819"/>
<dbReference type="HOGENOM" id="CLU_077975_9_4_1"/>
<dbReference type="InParanoid" id="A0A0A0MS06"/>
<dbReference type="OMA" id="AKMDCIP"/>
<dbReference type="OrthoDB" id="9803478at2759"/>
<dbReference type="PAN-GO" id="A0A0A0MS06">
    <property type="GO annotations" value="2 GO annotations based on evolutionary models"/>
</dbReference>
<dbReference type="PRO" id="PR:A0A0A0MS06"/>
<dbReference type="Proteomes" id="UP000005640">
    <property type="component" value="Chromosome 7"/>
</dbReference>
<dbReference type="RNAct" id="A0A0A0MS06">
    <property type="molecule type" value="protein"/>
</dbReference>
<dbReference type="Bgee" id="ENSG00000211749">
    <property type="expression patterns" value="Expressed in granulocyte and 72 other cell types or tissues"/>
</dbReference>
<dbReference type="GO" id="GO:0005886">
    <property type="term" value="C:plasma membrane"/>
    <property type="evidence" value="ECO:0000318"/>
    <property type="project" value="GO_Central"/>
</dbReference>
<dbReference type="GO" id="GO:0042101">
    <property type="term" value="C:T cell receptor complex"/>
    <property type="evidence" value="ECO:0007669"/>
    <property type="project" value="UniProtKB-KW"/>
</dbReference>
<dbReference type="GO" id="GO:0002250">
    <property type="term" value="P:adaptive immune response"/>
    <property type="evidence" value="ECO:0007669"/>
    <property type="project" value="UniProtKB-KW"/>
</dbReference>
<dbReference type="GO" id="GO:0007166">
    <property type="term" value="P:cell surface receptor signaling pathway"/>
    <property type="evidence" value="ECO:0000318"/>
    <property type="project" value="GO_Central"/>
</dbReference>
<dbReference type="Gene3D" id="2.60.40.10">
    <property type="entry name" value="Immunoglobulins"/>
    <property type="match status" value="1"/>
</dbReference>
<dbReference type="InterPro" id="IPR007110">
    <property type="entry name" value="Ig-like_dom"/>
</dbReference>
<dbReference type="InterPro" id="IPR036179">
    <property type="entry name" value="Ig-like_dom_sf"/>
</dbReference>
<dbReference type="InterPro" id="IPR013783">
    <property type="entry name" value="Ig-like_fold"/>
</dbReference>
<dbReference type="InterPro" id="IPR013106">
    <property type="entry name" value="Ig_V-set"/>
</dbReference>
<dbReference type="InterPro" id="IPR050413">
    <property type="entry name" value="TCR_beta_variable"/>
</dbReference>
<dbReference type="PANTHER" id="PTHR23268:SF82">
    <property type="entry name" value="NON-FUNCTIONAL T CELL RECEPTOR BETA VARIABLE 23-1-RELATED"/>
    <property type="match status" value="1"/>
</dbReference>
<dbReference type="PANTHER" id="PTHR23268">
    <property type="entry name" value="T-CELL RECEPTOR BETA CHAIN"/>
    <property type="match status" value="1"/>
</dbReference>
<dbReference type="Pfam" id="PF07686">
    <property type="entry name" value="V-set"/>
    <property type="match status" value="1"/>
</dbReference>
<dbReference type="SUPFAM" id="SSF48726">
    <property type="entry name" value="Immunoglobulin"/>
    <property type="match status" value="1"/>
</dbReference>
<dbReference type="PROSITE" id="PS50835">
    <property type="entry name" value="IG_LIKE"/>
    <property type="match status" value="1"/>
</dbReference>
<reference key="1">
    <citation type="journal article" date="2003" name="Nature">
        <title>The DNA sequence of human chromosome 7.</title>
        <authorList>
            <person name="Hillier L.W."/>
            <person name="Fulton R.S."/>
            <person name="Fulton L.A."/>
            <person name="Graves T.A."/>
            <person name="Pepin K.H."/>
            <person name="Wagner-McPherson C."/>
            <person name="Layman D."/>
            <person name="Maas J."/>
            <person name="Jaeger S."/>
            <person name="Walker R."/>
            <person name="Wylie K."/>
            <person name="Sekhon M."/>
            <person name="Becker M.C."/>
            <person name="O'Laughlin M.D."/>
            <person name="Schaller M.E."/>
            <person name="Fewell G.A."/>
            <person name="Delehaunty K.D."/>
            <person name="Miner T.L."/>
            <person name="Nash W.E."/>
            <person name="Cordes M."/>
            <person name="Du H."/>
            <person name="Sun H."/>
            <person name="Edwards J."/>
            <person name="Bradshaw-Cordum H."/>
            <person name="Ali J."/>
            <person name="Andrews S."/>
            <person name="Isak A."/>
            <person name="Vanbrunt A."/>
            <person name="Nguyen C."/>
            <person name="Du F."/>
            <person name="Lamar B."/>
            <person name="Courtney L."/>
            <person name="Kalicki J."/>
            <person name="Ozersky P."/>
            <person name="Bielicki L."/>
            <person name="Scott K."/>
            <person name="Holmes A."/>
            <person name="Harkins R."/>
            <person name="Harris A."/>
            <person name="Strong C.M."/>
            <person name="Hou S."/>
            <person name="Tomlinson C."/>
            <person name="Dauphin-Kohlberg S."/>
            <person name="Kozlowicz-Reilly A."/>
            <person name="Leonard S."/>
            <person name="Rohlfing T."/>
            <person name="Rock S.M."/>
            <person name="Tin-Wollam A.-M."/>
            <person name="Abbott A."/>
            <person name="Minx P."/>
            <person name="Maupin R."/>
            <person name="Strowmatt C."/>
            <person name="Latreille P."/>
            <person name="Miller N."/>
            <person name="Johnson D."/>
            <person name="Murray J."/>
            <person name="Woessner J.P."/>
            <person name="Wendl M.C."/>
            <person name="Yang S.-P."/>
            <person name="Schultz B.R."/>
            <person name="Wallis J.W."/>
            <person name="Spieth J."/>
            <person name="Bieri T.A."/>
            <person name="Nelson J.O."/>
            <person name="Berkowicz N."/>
            <person name="Wohldmann P.E."/>
            <person name="Cook L.L."/>
            <person name="Hickenbotham M.T."/>
            <person name="Eldred J."/>
            <person name="Williams D."/>
            <person name="Bedell J.A."/>
            <person name="Mardis E.R."/>
            <person name="Clifton S.W."/>
            <person name="Chissoe S.L."/>
            <person name="Marra M.A."/>
            <person name="Raymond C."/>
            <person name="Haugen E."/>
            <person name="Gillett W."/>
            <person name="Zhou Y."/>
            <person name="James R."/>
            <person name="Phelps K."/>
            <person name="Iadanoto S."/>
            <person name="Bubb K."/>
            <person name="Simms E."/>
            <person name="Levy R."/>
            <person name="Clendenning J."/>
            <person name="Kaul R."/>
            <person name="Kent W.J."/>
            <person name="Furey T.S."/>
            <person name="Baertsch R.A."/>
            <person name="Brent M.R."/>
            <person name="Keibler E."/>
            <person name="Flicek P."/>
            <person name="Bork P."/>
            <person name="Suyama M."/>
            <person name="Bailey J.A."/>
            <person name="Portnoy M.E."/>
            <person name="Torrents D."/>
            <person name="Chinwalla A.T."/>
            <person name="Gish W.R."/>
            <person name="Eddy S.R."/>
            <person name="McPherson J.D."/>
            <person name="Olson M.V."/>
            <person name="Eichler E.E."/>
            <person name="Green E.D."/>
            <person name="Waterston R.H."/>
            <person name="Wilson R.K."/>
        </authorList>
    </citation>
    <scope>NUCLEOTIDE SEQUENCE [LARGE SCALE GENOMIC DNA] (IMGT ALLELE TRBV23-1*01)</scope>
</reference>
<reference key="2">
    <citation type="journal article" date="1998" name="Exp. Clin. Immunogenet.">
        <title>IMGT (ImMunoGeneTics) locus on focus. A new section of Experimental and Clinical Immunogenetics.</title>
        <authorList>
            <person name="Lefranc M.P."/>
        </authorList>
    </citation>
    <scope>CHARACTERIZATION</scope>
</reference>
<reference key="3">
    <citation type="book" date="2001" name="The T Cell Receptor FactsBook.">
        <title>The T Cell Receptor FactsBook.</title>
        <editorList>
            <person name="Lefranc M.P."/>
            <person name="Lefranc G."/>
        </editorList>
        <authorList>
            <person name="Lefranc M.P."/>
            <person name="Lefranc G."/>
        </authorList>
    </citation>
    <scope>NOMENCLATURE</scope>
</reference>
<reference key="4">
    <citation type="journal article" date="2004" name="Nat. Rev. Immunol.">
        <title>The many important facets of T-cell repertoire diversity.</title>
        <authorList>
            <person name="Nikolich-Zugich J."/>
            <person name="Slifka M.K."/>
            <person name="Messaoudi I."/>
        </authorList>
    </citation>
    <scope>REVIEW ON T CELL REPERTOIRE DIVERSITY</scope>
</reference>
<reference key="5">
    <citation type="journal article" date="2010" name="Cold Spring Harb. Perspect. Biol.">
        <title>Structural biology of the T-cell receptor: insights into receptor assembly, ligand recognition, and initiation of signaling.</title>
        <authorList>
            <person name="Wucherpfennig K.W."/>
            <person name="Gagnon E."/>
            <person name="Call M.J."/>
            <person name="Huseby E.S."/>
            <person name="Call M.E."/>
        </authorList>
    </citation>
    <scope>REVIEW ON T CELL RECEPTOR-CD3 COMPLEX ASSEMBLY</scope>
    <scope>SUBCELLULAR LOCATION</scope>
</reference>
<reference key="6">
    <citation type="journal article" date="2013" name="Nat. Rev. Immunol.">
        <title>T cell receptor signalling networks: branched, diversified and bounded.</title>
        <authorList>
            <person name="Brownlie R.J."/>
            <person name="Zamoyska R."/>
        </authorList>
    </citation>
    <scope>REVIEW ON T CELL RECEPTOR SIGNALING</scope>
</reference>
<reference key="7">
    <citation type="journal article" date="2014" name="Front. Immunol.">
        <title>Immunoglobulin and T Cell Receptor Genes: IMGT((R)) and the Birth and Rise of Immunoinformatics.</title>
        <authorList>
            <person name="Lefranc M.P."/>
        </authorList>
    </citation>
    <scope>NOMENCLATURE</scope>
</reference>
<reference key="8">
    <citation type="journal article" date="2015" name="Annu. Rev. Immunol.">
        <title>T cell antigen receptor recognition of antigen-presenting molecules.</title>
        <authorList>
            <person name="Rossjohn J."/>
            <person name="Gras S."/>
            <person name="Miles J.J."/>
            <person name="Turner S.J."/>
            <person name="Godfrey D.I."/>
            <person name="McCluskey J."/>
        </authorList>
    </citation>
    <scope>REVIEW ON FUNCTION</scope>
</reference>
<feature type="signal peptide" evidence="1">
    <location>
        <begin position="1"/>
        <end position="21"/>
    </location>
</feature>
<feature type="chain" id="PRO_5014506437" description="Probable non-functional T cell receptor beta variable 23-1" evidence="1">
    <location>
        <begin position="22"/>
        <end position="115"/>
    </location>
</feature>
<feature type="domain" description="Ig-like" evidence="2">
    <location>
        <begin position="22"/>
        <end position="115" status="greater than"/>
    </location>
</feature>
<feature type="disulfide bond" evidence="2">
    <location>
        <begin position="42"/>
        <end position="111"/>
    </location>
</feature>
<feature type="non-terminal residue">
    <location>
        <position position="115"/>
    </location>
</feature>
<keyword id="KW-1064">Adaptive immunity</keyword>
<keyword id="KW-1003">Cell membrane</keyword>
<keyword id="KW-1015">Disulfide bond</keyword>
<keyword id="KW-0391">Immunity</keyword>
<keyword id="KW-0393">Immunoglobulin domain</keyword>
<keyword id="KW-0472">Membrane</keyword>
<keyword id="KW-0675">Receptor</keyword>
<keyword id="KW-1185">Reference proteome</keyword>
<keyword id="KW-0732">Signal</keyword>
<keyword id="KW-1279">T cell receptor</keyword>
<evidence type="ECO:0000255" key="1"/>
<evidence type="ECO:0000255" key="2">
    <source>
        <dbReference type="PROSITE-ProRule" id="PRU00114"/>
    </source>
</evidence>
<evidence type="ECO:0000269" key="3">
    <source>
    </source>
</evidence>
<evidence type="ECO:0000303" key="4">
    <source>
    </source>
</evidence>
<evidence type="ECO:0000303" key="5">
    <source>
    </source>
</evidence>
<evidence type="ECO:0000303" key="6">
    <source>
    </source>
</evidence>
<evidence type="ECO:0000303" key="7">
    <source>
    </source>
</evidence>
<evidence type="ECO:0000303" key="8">
    <source>
    </source>
</evidence>
<evidence type="ECO:0000303" key="9">
    <source>
    </source>
</evidence>
<evidence type="ECO:0000303" key="10">
    <source ref="3"/>
</evidence>
<evidence type="ECO:0000305" key="11"/>
<evidence type="ECO:0000312" key="12">
    <source>
        <dbReference type="HGNC" id="HGNC:12201"/>
    </source>
</evidence>
<gene>
    <name evidence="10 12" type="primary">TRBV23-1</name>
</gene>